<comment type="subcellular location">
    <subcellularLocation>
        <location evidence="3">Membrane</location>
        <topology evidence="3">Multi-pass membrane protein</topology>
    </subcellularLocation>
</comment>
<comment type="similarity">
    <text evidence="3">Belongs to the major facilitator superfamily. Sodium/anion cotransporter family.</text>
</comment>
<protein>
    <recommendedName>
        <fullName evidence="3">Uncharacterized transporter slc-17.2</fullName>
    </recommendedName>
</protein>
<organism>
    <name type="scientific">Caenorhabditis elegans</name>
    <dbReference type="NCBI Taxonomy" id="6239"/>
    <lineage>
        <taxon>Eukaryota</taxon>
        <taxon>Metazoa</taxon>
        <taxon>Ecdysozoa</taxon>
        <taxon>Nematoda</taxon>
        <taxon>Chromadorea</taxon>
        <taxon>Rhabditida</taxon>
        <taxon>Rhabditina</taxon>
        <taxon>Rhabditomorpha</taxon>
        <taxon>Rhabditoidea</taxon>
        <taxon>Rhabditidae</taxon>
        <taxon>Peloderinae</taxon>
        <taxon>Caenorhabditis</taxon>
    </lineage>
</organism>
<accession>Q03567</accession>
<feature type="chain" id="PRO_0000220950" description="Uncharacterized transporter slc-17.2" evidence="3">
    <location>
        <begin position="1"/>
        <end position="493"/>
    </location>
</feature>
<feature type="transmembrane region" description="Helical" evidence="1">
    <location>
        <begin position="10"/>
        <end position="30"/>
    </location>
</feature>
<feature type="transmembrane region" description="Helical" evidence="1">
    <location>
        <begin position="85"/>
        <end position="105"/>
    </location>
</feature>
<feature type="transmembrane region" description="Helical" evidence="1">
    <location>
        <begin position="112"/>
        <end position="132"/>
    </location>
</feature>
<feature type="transmembrane region" description="Helical" evidence="1">
    <location>
        <begin position="144"/>
        <end position="164"/>
    </location>
</feature>
<feature type="transmembrane region" description="Helical" evidence="1">
    <location>
        <begin position="175"/>
        <end position="195"/>
    </location>
</feature>
<feature type="transmembrane region" description="Helical" evidence="1">
    <location>
        <begin position="205"/>
        <end position="225"/>
    </location>
</feature>
<feature type="transmembrane region" description="Helical" evidence="1">
    <location>
        <begin position="272"/>
        <end position="292"/>
    </location>
</feature>
<feature type="transmembrane region" description="Helical" evidence="1">
    <location>
        <begin position="311"/>
        <end position="331"/>
    </location>
</feature>
<feature type="transmembrane region" description="Helical" evidence="1">
    <location>
        <begin position="348"/>
        <end position="368"/>
    </location>
</feature>
<feature type="transmembrane region" description="Helical" evidence="1">
    <location>
        <begin position="375"/>
        <end position="395"/>
    </location>
</feature>
<feature type="transmembrane region" description="Helical" evidence="1">
    <location>
        <begin position="406"/>
        <end position="426"/>
    </location>
</feature>
<feature type="transmembrane region" description="Helical" evidence="1">
    <location>
        <begin position="441"/>
        <end position="461"/>
    </location>
</feature>
<feature type="glycosylation site" description="N-linked (GlcNAc...) asparagine" evidence="1">
    <location>
        <position position="35"/>
    </location>
</feature>
<feature type="glycosylation site" description="N-linked (GlcNAc...) asparagine" evidence="1">
    <location>
        <position position="47"/>
    </location>
</feature>
<feature type="glycosylation site" description="N-linked (GlcNAc...) asparagine" evidence="2">
    <location>
        <position position="69"/>
    </location>
</feature>
<feature type="glycosylation site" description="N-linked (GlcNAc...) asparagine" evidence="1">
    <location>
        <position position="305"/>
    </location>
</feature>
<feature type="glycosylation site" description="N-linked (GlcNAc...) asparagine" evidence="1">
    <location>
        <position position="433"/>
    </location>
</feature>
<reference key="1">
    <citation type="journal article" date="1994" name="Nature">
        <title>2.2 Mb of contiguous nucleotide sequence from chromosome III of C. elegans.</title>
        <authorList>
            <person name="Wilson R."/>
            <person name="Ainscough R."/>
            <person name="Anderson K."/>
            <person name="Baynes C."/>
            <person name="Berks M."/>
            <person name="Bonfield J."/>
            <person name="Burton J."/>
            <person name="Connell M."/>
            <person name="Copsey T."/>
            <person name="Cooper J."/>
            <person name="Coulson A."/>
            <person name="Craxton M."/>
            <person name="Dear S."/>
            <person name="Du Z."/>
            <person name="Durbin R."/>
            <person name="Favello A."/>
            <person name="Fraser A."/>
            <person name="Fulton L."/>
            <person name="Gardner A."/>
            <person name="Green P."/>
            <person name="Hawkins T."/>
            <person name="Hillier L."/>
            <person name="Jier M."/>
            <person name="Johnston L."/>
            <person name="Jones M."/>
            <person name="Kershaw J."/>
            <person name="Kirsten J."/>
            <person name="Laisster N."/>
            <person name="Latreille P."/>
            <person name="Lightning J."/>
            <person name="Lloyd C."/>
            <person name="Mortimore B."/>
            <person name="O'Callaghan M."/>
            <person name="Parsons J."/>
            <person name="Percy C."/>
            <person name="Rifken L."/>
            <person name="Roopra A."/>
            <person name="Saunders D."/>
            <person name="Shownkeen R."/>
            <person name="Sims M."/>
            <person name="Smaldon N."/>
            <person name="Smith A."/>
            <person name="Smith M."/>
            <person name="Sonnhammer E."/>
            <person name="Staden R."/>
            <person name="Sulston J."/>
            <person name="Thierry-Mieg J."/>
            <person name="Thomas K."/>
            <person name="Vaudin M."/>
            <person name="Vaughan K."/>
            <person name="Waterston R."/>
            <person name="Watson A."/>
            <person name="Weinstock L."/>
            <person name="Wilkinson-Sproat J."/>
            <person name="Wohldman P."/>
        </authorList>
    </citation>
    <scope>NUCLEOTIDE SEQUENCE [LARGE SCALE GENOMIC DNA]</scope>
    <source>
        <strain>Bristol N2</strain>
    </source>
</reference>
<reference key="2">
    <citation type="journal article" date="1998" name="Science">
        <title>Genome sequence of the nematode C. elegans: a platform for investigating biology.</title>
        <authorList>
            <consortium name="The C. elegans sequencing consortium"/>
        </authorList>
    </citation>
    <scope>NUCLEOTIDE SEQUENCE [LARGE SCALE GENOMIC DNA]</scope>
    <source>
        <strain>Bristol N2</strain>
    </source>
</reference>
<reference key="3">
    <citation type="journal article" date="2007" name="Mol. Cell. Proteomics">
        <title>Proteomics reveals N-linked glycoprotein diversity in Caenorhabditis elegans and suggests an atypical translocation mechanism for integral membrane proteins.</title>
        <authorList>
            <person name="Kaji H."/>
            <person name="Kamiie J."/>
            <person name="Kawakami H."/>
            <person name="Kido K."/>
            <person name="Yamauchi Y."/>
            <person name="Shinkawa T."/>
            <person name="Taoka M."/>
            <person name="Takahashi N."/>
            <person name="Isobe T."/>
        </authorList>
    </citation>
    <scope>GLYCOSYLATION [LARGE SCALE ANALYSIS] AT ASN-69</scope>
    <scope>IDENTIFICATION BY MASS SPECTROMETRY</scope>
    <source>
        <strain>Bristol N2</strain>
    </source>
</reference>
<dbReference type="EMBL" id="Z19153">
    <property type="protein sequence ID" value="CAA79549.1"/>
    <property type="molecule type" value="Genomic_DNA"/>
</dbReference>
<dbReference type="PIR" id="G88553">
    <property type="entry name" value="G88553"/>
</dbReference>
<dbReference type="PIR" id="S28286">
    <property type="entry name" value="S28286"/>
</dbReference>
<dbReference type="SMR" id="Q03567"/>
<dbReference type="FunCoup" id="Q03567">
    <property type="interactions" value="1250"/>
</dbReference>
<dbReference type="iPTMnet" id="Q03567"/>
<dbReference type="PaxDb" id="6239-C38C10.2"/>
<dbReference type="PeptideAtlas" id="Q03567"/>
<dbReference type="EnsemblMetazoa" id="C38C10.2.1">
    <property type="protein sequence ID" value="C38C10.2.1"/>
    <property type="gene ID" value="WBGene00008000"/>
</dbReference>
<dbReference type="KEGG" id="cel:CELE_C38C10.2"/>
<dbReference type="UCSC" id="C38C10.2.1">
    <property type="organism name" value="c. elegans"/>
</dbReference>
<dbReference type="AGR" id="WB:WBGene00008000"/>
<dbReference type="CTD" id="176317"/>
<dbReference type="WormBase" id="C38C10.2">
    <property type="protein sequence ID" value="CE08647"/>
    <property type="gene ID" value="WBGene00008000"/>
    <property type="gene designation" value="slc-17.2"/>
</dbReference>
<dbReference type="eggNOG" id="KOG2532">
    <property type="taxonomic scope" value="Eukaryota"/>
</dbReference>
<dbReference type="GeneTree" id="ENSGT00940000163850"/>
<dbReference type="HOGENOM" id="CLU_001265_5_0_1"/>
<dbReference type="InParanoid" id="Q03567"/>
<dbReference type="OMA" id="PLWAVAM"/>
<dbReference type="OrthoDB" id="2985014at2759"/>
<dbReference type="PhylomeDB" id="Q03567"/>
<dbReference type="Reactome" id="R-CEL-2672351">
    <property type="pathway name" value="Stimuli-sensing channels"/>
</dbReference>
<dbReference type="Reactome" id="R-CEL-428643">
    <property type="pathway name" value="Organic anion transporters"/>
</dbReference>
<dbReference type="PRO" id="PR:Q03567"/>
<dbReference type="Proteomes" id="UP000001940">
    <property type="component" value="Chromosome III"/>
</dbReference>
<dbReference type="Bgee" id="WBGene00008000">
    <property type="expression patterns" value="Expressed in embryo and 4 other cell types or tissues"/>
</dbReference>
<dbReference type="GO" id="GO:0016020">
    <property type="term" value="C:membrane"/>
    <property type="evidence" value="ECO:0000318"/>
    <property type="project" value="GO_Central"/>
</dbReference>
<dbReference type="GO" id="GO:0015293">
    <property type="term" value="F:symporter activity"/>
    <property type="evidence" value="ECO:0007669"/>
    <property type="project" value="UniProtKB-KW"/>
</dbReference>
<dbReference type="GO" id="GO:0022857">
    <property type="term" value="F:transmembrane transporter activity"/>
    <property type="evidence" value="ECO:0000318"/>
    <property type="project" value="GO_Central"/>
</dbReference>
<dbReference type="GO" id="GO:0006814">
    <property type="term" value="P:sodium ion transport"/>
    <property type="evidence" value="ECO:0007669"/>
    <property type="project" value="UniProtKB-KW"/>
</dbReference>
<dbReference type="CDD" id="cd17318">
    <property type="entry name" value="MFS_SLC17"/>
    <property type="match status" value="1"/>
</dbReference>
<dbReference type="FunFam" id="1.20.1250.20:FF:000003">
    <property type="entry name" value="Solute carrier family 17 member 3"/>
    <property type="match status" value="1"/>
</dbReference>
<dbReference type="FunFam" id="1.20.1250.20:FF:000791">
    <property type="entry name" value="Uncharacterized transporter slc-17.2"/>
    <property type="match status" value="1"/>
</dbReference>
<dbReference type="Gene3D" id="1.20.1250.20">
    <property type="entry name" value="MFS general substrate transporter like domains"/>
    <property type="match status" value="2"/>
</dbReference>
<dbReference type="InterPro" id="IPR011701">
    <property type="entry name" value="MFS"/>
</dbReference>
<dbReference type="InterPro" id="IPR020846">
    <property type="entry name" value="MFS_dom"/>
</dbReference>
<dbReference type="InterPro" id="IPR050382">
    <property type="entry name" value="MFS_Na/Anion_cotransporter"/>
</dbReference>
<dbReference type="InterPro" id="IPR036259">
    <property type="entry name" value="MFS_trans_sf"/>
</dbReference>
<dbReference type="PANTHER" id="PTHR11662:SF399">
    <property type="entry name" value="FI19708P1-RELATED"/>
    <property type="match status" value="1"/>
</dbReference>
<dbReference type="PANTHER" id="PTHR11662">
    <property type="entry name" value="SOLUTE CARRIER FAMILY 17"/>
    <property type="match status" value="1"/>
</dbReference>
<dbReference type="Pfam" id="PF07690">
    <property type="entry name" value="MFS_1"/>
    <property type="match status" value="1"/>
</dbReference>
<dbReference type="SUPFAM" id="SSF103473">
    <property type="entry name" value="MFS general substrate transporter"/>
    <property type="match status" value="1"/>
</dbReference>
<dbReference type="PROSITE" id="PS50850">
    <property type="entry name" value="MFS"/>
    <property type="match status" value="1"/>
</dbReference>
<evidence type="ECO:0000255" key="1"/>
<evidence type="ECO:0000269" key="2">
    <source>
    </source>
</evidence>
<evidence type="ECO:0000305" key="3"/>
<evidence type="ECO:0000312" key="4">
    <source>
        <dbReference type="WormBase" id="C38C10.2"/>
    </source>
</evidence>
<proteinExistence type="evidence at protein level"/>
<keyword id="KW-0325">Glycoprotein</keyword>
<keyword id="KW-0406">Ion transport</keyword>
<keyword id="KW-0472">Membrane</keyword>
<keyword id="KW-1185">Reference proteome</keyword>
<keyword id="KW-0915">Sodium</keyword>
<keyword id="KW-0739">Sodium transport</keyword>
<keyword id="KW-0769">Symport</keyword>
<keyword id="KW-0812">Transmembrane</keyword>
<keyword id="KW-1133">Transmembrane helix</keyword>
<keyword id="KW-0813">Transport</keyword>
<sequence>MEGATTKPRLVPSTRFALSLVMFFGCLVTYMMRTNMSFAVVCMVNENKTDTGVEKVSRCGKEMTPVESNSSVIGEFDWDKQTTGMVLSSFFYGYIGSQIIGGHLASRYGGKRVVFVTILGSALLTLLNPVAARTSEYALAILRAAIGFLQGATFPAMHTMWSVWGPPLELSVLTGVTYAGAQIGNVIVLPLSGFLCEYGFDGGWPSIFYIIGVFGVLWTAVWWYVSSDKPATHPRITPEEKQYIVTAVEASMGKDTGKVPSTPWIKILTSPAVWACWAGHFAGDWGAYTMLVSLPSFLKDVLGLNLSSLGAVASIPYIAYFLAINAGGVLADTLRSKGILSTLNTRRAAMLVALIGQGIFLVASGYCGCGQDVLVIIFITCGMAISGLQYAGFVVNYLEIAPPFSGTVMGTGNTISALAGIISPAVSSYLTPNGTQEEWQMVLWLTAGILTIGALLFSIFASGEVQPWAKLTAEEGHEMAPLREGEKIELATA</sequence>
<gene>
    <name evidence="4" type="ORF">C38C10.2</name>
</gene>
<name>SL172_CAEEL</name>